<sequence>MIKNPKVLILTAHYGNGHVQVAKTLEQTFRQKGIKDVIVCDLFGESHPVITDITKYLYLKSYTIGKELYRLFYYGVEKIYDKKIASWYANFGRKRLKLLLQAEKPDIVINTFPIIAVPELKKQTGISIPVYNVLTDFCVHKIWIHREVDRYFVATDHVKKVMVDIGVPAEQIVETGIPIRSSFELKINPDIIYNKYQLCKNKKILLIVAGAHGVLGSVKELCQSFMSVPDLQVVVVCGKNEALKQDLVGVQETNPDALKVFGYVENIDELFRVTSCMITKPGGITLSEAAALQVPVILYKPVPGQENENAMYFERKGAAVVIRDDSEVFAKTEALLQDDMKLLQMKEAMKSIYRPEPADHIVDTILAENHVEPNHIPIKSPALAQSFT</sequence>
<keyword id="KW-0119">Carbohydrate metabolism</keyword>
<keyword id="KW-1003">Cell membrane</keyword>
<keyword id="KW-0328">Glycosyltransferase</keyword>
<keyword id="KW-0444">Lipid biosynthesis</keyword>
<keyword id="KW-0443">Lipid metabolism</keyword>
<keyword id="KW-0472">Membrane</keyword>
<keyword id="KW-0808">Transferase</keyword>
<name>UGTP_BACAC</name>
<protein>
    <recommendedName>
        <fullName evidence="1">Processive diacylglycerol beta-glucosyltransferase</fullName>
        <ecNumber>2.4.1.315</ecNumber>
    </recommendedName>
    <alternativeName>
        <fullName evidence="1">Beta-diglucosyldiacylglycerol synthase</fullName>
        <shortName evidence="1">Beta-DGS</shortName>
        <shortName evidence="1">DGlcDAG synthase</shortName>
        <shortName evidence="1">Glc2-DAG synthase</shortName>
    </alternativeName>
    <alternativeName>
        <fullName evidence="1">Beta-gentiobiosyldiacylglycerol synthase</fullName>
    </alternativeName>
    <alternativeName>
        <fullName evidence="1">Beta-monoglucosyldiacylglycerol synthase</fullName>
        <shortName evidence="1">Beta-MGS</shortName>
        <shortName evidence="1">MGlcDAG synthase</shortName>
    </alternativeName>
    <alternativeName>
        <fullName evidence="1">Beta-triglucosyldiacylglycerol synthase</fullName>
        <shortName evidence="1">TGlcDAG synthase</shortName>
    </alternativeName>
    <alternativeName>
        <fullName>Diglucosyl diacylglycerol synthase (1,6-linking)</fullName>
    </alternativeName>
    <alternativeName>
        <fullName evidence="1">Glucosyl-beta-1,6-glucosyldiacylglycerol synthase</fullName>
    </alternativeName>
    <alternativeName>
        <fullName evidence="1">UDP glucosyltransferase</fullName>
    </alternativeName>
    <alternativeName>
        <fullName evidence="1">UDP-glucose:1,2-diacylglycerol-3-beta-D-glucosyltransferase</fullName>
    </alternativeName>
</protein>
<dbReference type="EC" id="2.4.1.315"/>
<dbReference type="EMBL" id="CP001215">
    <property type="protein sequence ID" value="ACP14160.1"/>
    <property type="molecule type" value="Genomic_DNA"/>
</dbReference>
<dbReference type="RefSeq" id="WP_000594708.1">
    <property type="nucleotide sequence ID" value="NC_012581.1"/>
</dbReference>
<dbReference type="SMR" id="C3LHC1"/>
<dbReference type="CAZy" id="GT28">
    <property type="family name" value="Glycosyltransferase Family 28"/>
</dbReference>
<dbReference type="KEGG" id="bah:BAMEG_4095"/>
<dbReference type="HOGENOM" id="CLU_028367_0_1_9"/>
<dbReference type="UniPathway" id="UPA00894"/>
<dbReference type="GO" id="GO:0005886">
    <property type="term" value="C:plasma membrane"/>
    <property type="evidence" value="ECO:0007669"/>
    <property type="project" value="UniProtKB-SubCell"/>
</dbReference>
<dbReference type="GO" id="GO:0047228">
    <property type="term" value="F:1,2-diacylglycerol 3-glucosyltransferase activity"/>
    <property type="evidence" value="ECO:0007669"/>
    <property type="project" value="UniProtKB-UniRule"/>
</dbReference>
<dbReference type="GO" id="GO:0009246">
    <property type="term" value="P:enterobacterial common antigen biosynthetic process"/>
    <property type="evidence" value="ECO:0007669"/>
    <property type="project" value="UniProtKB-UniPathway"/>
</dbReference>
<dbReference type="GO" id="GO:0009247">
    <property type="term" value="P:glycolipid biosynthetic process"/>
    <property type="evidence" value="ECO:0007669"/>
    <property type="project" value="UniProtKB-UniRule"/>
</dbReference>
<dbReference type="GO" id="GO:0070395">
    <property type="term" value="P:lipoteichoic acid biosynthetic process"/>
    <property type="evidence" value="ECO:0007669"/>
    <property type="project" value="UniProtKB-UniRule"/>
</dbReference>
<dbReference type="CDD" id="cd17507">
    <property type="entry name" value="GT28_Beta-DGS-like"/>
    <property type="match status" value="1"/>
</dbReference>
<dbReference type="Gene3D" id="3.40.50.2000">
    <property type="entry name" value="Glycogen Phosphorylase B"/>
    <property type="match status" value="1"/>
</dbReference>
<dbReference type="HAMAP" id="MF_01280">
    <property type="entry name" value="Diacylglyc_glucosyltr"/>
    <property type="match status" value="1"/>
</dbReference>
<dbReference type="InterPro" id="IPR009695">
    <property type="entry name" value="Diacylglyc_glucosyltr_N"/>
</dbReference>
<dbReference type="InterPro" id="IPR007235">
    <property type="entry name" value="Glyco_trans_28_C"/>
</dbReference>
<dbReference type="InterPro" id="IPR050519">
    <property type="entry name" value="Glycosyltransf_28_UgtP"/>
</dbReference>
<dbReference type="InterPro" id="IPR023589">
    <property type="entry name" value="Pro_diacylglycrl_glcsylTrfase"/>
</dbReference>
<dbReference type="NCBIfam" id="NF010135">
    <property type="entry name" value="PRK13609.1"/>
    <property type="match status" value="1"/>
</dbReference>
<dbReference type="PANTHER" id="PTHR43025">
    <property type="entry name" value="MONOGALACTOSYLDIACYLGLYCEROL SYNTHASE"/>
    <property type="match status" value="1"/>
</dbReference>
<dbReference type="PANTHER" id="PTHR43025:SF3">
    <property type="entry name" value="MONOGALACTOSYLDIACYLGLYCEROL SYNTHASE 1, CHLOROPLASTIC"/>
    <property type="match status" value="1"/>
</dbReference>
<dbReference type="Pfam" id="PF04101">
    <property type="entry name" value="Glyco_tran_28_C"/>
    <property type="match status" value="1"/>
</dbReference>
<dbReference type="Pfam" id="PF06925">
    <property type="entry name" value="MGDG_synth"/>
    <property type="match status" value="1"/>
</dbReference>
<dbReference type="SUPFAM" id="SSF53756">
    <property type="entry name" value="UDP-Glycosyltransferase/glycogen phosphorylase"/>
    <property type="match status" value="1"/>
</dbReference>
<reference key="1">
    <citation type="submission" date="2008-10" db="EMBL/GenBank/DDBJ databases">
        <title>Genome sequence of Bacillus anthracis str. CDC 684.</title>
        <authorList>
            <person name="Dodson R.J."/>
            <person name="Munk A.C."/>
            <person name="Brettin T."/>
            <person name="Bruce D."/>
            <person name="Detter C."/>
            <person name="Tapia R."/>
            <person name="Han C."/>
            <person name="Sutton G."/>
            <person name="Sims D."/>
        </authorList>
    </citation>
    <scope>NUCLEOTIDE SEQUENCE [LARGE SCALE GENOMIC DNA]</scope>
    <source>
        <strain>CDC 684 / NRRL 3495</strain>
    </source>
</reference>
<feature type="chain" id="PRO_1000165232" description="Processive diacylglycerol beta-glucosyltransferase">
    <location>
        <begin position="1"/>
        <end position="388"/>
    </location>
</feature>
<comment type="function">
    <text evidence="1">Processive glucosyltransferase involved in the biosynthesis of both the bilayer- and non-bilayer-forming membrane glucolipids. Is able to successively transfer up to three glucosyl residues to diacylglycerol (DAG), thereby catalyzing the formation of beta-monoglucosyl-DAG (3-O-(beta-D-glucopyranosyl)-1,2-diacyl-sn-glycerol), beta-diglucosyl-DAG (3-O-(beta-D-glucopyranosyl-beta-(1-&gt;6)-D-glucopyranosyl)-1,2-diacyl-sn-glycerol) and beta-triglucosyl-DAG (3-O-(beta-D-glucopyranosyl-beta-(1-&gt;6)-D-glucopyranosyl-beta-(1-&gt;6)-D-glucopyranosyl)-1,2-diacyl-sn-glycerol). Beta-diglucosyl-DAG is the predominant glycolipid found in Bacillales and is also used as a membrane anchor for lipoteichoic acid (LTA).</text>
</comment>
<comment type="catalytic activity">
    <reaction>
        <text>a 1,2-diacyl-3-O-(beta-D-glucopyranosyl)-sn-glycerol + UDP-alpha-D-glucose = a 1,2-diacyl-3-O-(beta-D-Glc-(1-&gt;6)-beta-D-Glc)-sn-glycerol + UDP + H(+)</text>
        <dbReference type="Rhea" id="RHEA:39031"/>
        <dbReference type="ChEBI" id="CHEBI:15378"/>
        <dbReference type="ChEBI" id="CHEBI:58223"/>
        <dbReference type="ChEBI" id="CHEBI:58885"/>
        <dbReference type="ChEBI" id="CHEBI:75799"/>
        <dbReference type="ChEBI" id="CHEBI:76264"/>
        <dbReference type="EC" id="2.4.1.315"/>
    </reaction>
</comment>
<comment type="catalytic activity">
    <reaction>
        <text>a 1,2-diacyl-3-O-(beta-D-Glc-(1-&gt;6)-beta-D-Glc)-sn-glycerol + UDP-alpha-D-glucose = a 1,2-diacyl-3-O-(beta-D-Glc-(1-&gt;6)-beta-D-Glc-(1-&gt;6)-beta-D-Glc)-sn-glycerol + UDP + H(+)</text>
        <dbReference type="Rhea" id="RHEA:39027"/>
        <dbReference type="ChEBI" id="CHEBI:15378"/>
        <dbReference type="ChEBI" id="CHEBI:58223"/>
        <dbReference type="ChEBI" id="CHEBI:58885"/>
        <dbReference type="ChEBI" id="CHEBI:76264"/>
        <dbReference type="ChEBI" id="CHEBI:76265"/>
        <dbReference type="EC" id="2.4.1.315"/>
    </reaction>
</comment>
<comment type="catalytic activity">
    <reaction evidence="1">
        <text>a 1,2-diacyl-sn-glycerol + UDP-alpha-D-glucose = a 1,2-diacyl-3-O-(beta-D-glucopyranosyl)-sn-glycerol + UDP + H(+)</text>
        <dbReference type="Rhea" id="RHEA:17285"/>
        <dbReference type="ChEBI" id="CHEBI:15378"/>
        <dbReference type="ChEBI" id="CHEBI:17815"/>
        <dbReference type="ChEBI" id="CHEBI:58223"/>
        <dbReference type="ChEBI" id="CHEBI:58885"/>
        <dbReference type="ChEBI" id="CHEBI:75799"/>
    </reaction>
</comment>
<comment type="pathway">
    <text evidence="1">Glycolipid metabolism; diglucosyl-diacylglycerol biosynthesis.</text>
</comment>
<comment type="subcellular location">
    <subcellularLocation>
        <location evidence="1">Cell membrane</location>
    </subcellularLocation>
</comment>
<comment type="similarity">
    <text evidence="1">Belongs to the glycosyltransferase 28 family. UgtP subfamily.</text>
</comment>
<organism>
    <name type="scientific">Bacillus anthracis (strain CDC 684 / NRRL 3495)</name>
    <dbReference type="NCBI Taxonomy" id="568206"/>
    <lineage>
        <taxon>Bacteria</taxon>
        <taxon>Bacillati</taxon>
        <taxon>Bacillota</taxon>
        <taxon>Bacilli</taxon>
        <taxon>Bacillales</taxon>
        <taxon>Bacillaceae</taxon>
        <taxon>Bacillus</taxon>
        <taxon>Bacillus cereus group</taxon>
    </lineage>
</organism>
<proteinExistence type="inferred from homology"/>
<evidence type="ECO:0000255" key="1">
    <source>
        <dbReference type="HAMAP-Rule" id="MF_01280"/>
    </source>
</evidence>
<accession>C3LHC1</accession>
<gene>
    <name evidence="1" type="primary">ugtP</name>
    <name type="ordered locus">BAMEG_4095</name>
</gene>